<comment type="function">
    <text evidence="1">This protein is involved in the repair of mismatches in DNA. It is required for dam-dependent methyl-directed DNA mismatch repair. May act as a 'molecular matchmaker', a protein that promotes the formation of a stable complex between two or more DNA-binding proteins in an ATP-dependent manner without itself being part of a final effector complex.</text>
</comment>
<comment type="similarity">
    <text evidence="1">Belongs to the DNA mismatch repair MutL/HexB family.</text>
</comment>
<name>MUTL_CARHZ</name>
<feature type="chain" id="PRO_1000010000" description="DNA mismatch repair protein MutL">
    <location>
        <begin position="1"/>
        <end position="578"/>
    </location>
</feature>
<evidence type="ECO:0000255" key="1">
    <source>
        <dbReference type="HAMAP-Rule" id="MF_00149"/>
    </source>
</evidence>
<proteinExistence type="inferred from homology"/>
<sequence length="578" mass="65646">MPKIKRLPDEVIKKIAAGEVVERPYSVVKELVENSLDAKAQNINVYIEEGGLGKIVVEDDGIGIPPEELPDALLRHTTSKIASFDDLYYLESFGFRGEALYSIAAVSKISIKSRVRGENNGYELIAHAGEVINLTEVGMAYGTVVTVSDLFFNTPARKKFLKSGQTEAGLIRQFIEKMAILYPGVKFSLFIDGKKIYSSAGIQEQLGLLARFWGLEKGNLLMLEEKLGEGFFIKGGIALPPAGKPHRKLQVFAVNKRLVKSGILTKAIDDAYESLLPTGLKPLVFLEVVVPGTWVDVNVHPQKLEVKFMDEQKIYLDVRTIIRNKLVNAKSSSLKSFSPARETNTKSEDNDYWQVTYFAEEFSGNSDKLLEKEDIFSTSDNLTFSLNKDFAKELNFQVIGQFSLKYIIVEKNDKLLIIDQHAAHERILYEKYQTKLNPFYSQVLTFPVRIKASPELEAFLQENYQNFLEIGLHIEPFGPGEYLVREIPEDFPQNNIANVLEEYLYEIMEQKEQVSFREKALKLFACKNAVKFGEKLTYSEMTNLVKELFKTNYPLSCPHGRPTIYELSLTEINKKFFR</sequence>
<accession>Q3ACA6</accession>
<keyword id="KW-0227">DNA damage</keyword>
<keyword id="KW-0234">DNA repair</keyword>
<keyword id="KW-1185">Reference proteome</keyword>
<protein>
    <recommendedName>
        <fullName evidence="1">DNA mismatch repair protein MutL</fullName>
    </recommendedName>
</protein>
<dbReference type="EMBL" id="CP000141">
    <property type="protein sequence ID" value="ABB15228.1"/>
    <property type="molecule type" value="Genomic_DNA"/>
</dbReference>
<dbReference type="RefSeq" id="WP_011344303.1">
    <property type="nucleotide sequence ID" value="NC_007503.1"/>
</dbReference>
<dbReference type="SMR" id="Q3ACA6"/>
<dbReference type="FunCoup" id="Q3ACA6">
    <property type="interactions" value="385"/>
</dbReference>
<dbReference type="STRING" id="246194.CHY_1396"/>
<dbReference type="KEGG" id="chy:CHY_1396"/>
<dbReference type="eggNOG" id="COG0323">
    <property type="taxonomic scope" value="Bacteria"/>
</dbReference>
<dbReference type="HOGENOM" id="CLU_004131_4_1_9"/>
<dbReference type="InParanoid" id="Q3ACA6"/>
<dbReference type="Proteomes" id="UP000002706">
    <property type="component" value="Chromosome"/>
</dbReference>
<dbReference type="GO" id="GO:0032300">
    <property type="term" value="C:mismatch repair complex"/>
    <property type="evidence" value="ECO:0007669"/>
    <property type="project" value="InterPro"/>
</dbReference>
<dbReference type="GO" id="GO:0005524">
    <property type="term" value="F:ATP binding"/>
    <property type="evidence" value="ECO:0007669"/>
    <property type="project" value="InterPro"/>
</dbReference>
<dbReference type="GO" id="GO:0016887">
    <property type="term" value="F:ATP hydrolysis activity"/>
    <property type="evidence" value="ECO:0007669"/>
    <property type="project" value="InterPro"/>
</dbReference>
<dbReference type="GO" id="GO:0140664">
    <property type="term" value="F:ATP-dependent DNA damage sensor activity"/>
    <property type="evidence" value="ECO:0007669"/>
    <property type="project" value="InterPro"/>
</dbReference>
<dbReference type="GO" id="GO:0030983">
    <property type="term" value="F:mismatched DNA binding"/>
    <property type="evidence" value="ECO:0007669"/>
    <property type="project" value="InterPro"/>
</dbReference>
<dbReference type="GO" id="GO:0006298">
    <property type="term" value="P:mismatch repair"/>
    <property type="evidence" value="ECO:0007669"/>
    <property type="project" value="UniProtKB-UniRule"/>
</dbReference>
<dbReference type="CDD" id="cd16926">
    <property type="entry name" value="HATPase_MutL-MLH-PMS-like"/>
    <property type="match status" value="1"/>
</dbReference>
<dbReference type="CDD" id="cd00782">
    <property type="entry name" value="MutL_Trans"/>
    <property type="match status" value="1"/>
</dbReference>
<dbReference type="FunFam" id="3.30.565.10:FF:000003">
    <property type="entry name" value="DNA mismatch repair endonuclease MutL"/>
    <property type="match status" value="1"/>
</dbReference>
<dbReference type="Gene3D" id="3.30.230.10">
    <property type="match status" value="1"/>
</dbReference>
<dbReference type="Gene3D" id="3.30.565.10">
    <property type="entry name" value="Histidine kinase-like ATPase, C-terminal domain"/>
    <property type="match status" value="1"/>
</dbReference>
<dbReference type="Gene3D" id="3.30.1540.20">
    <property type="entry name" value="MutL, C-terminal domain, dimerisation subdomain"/>
    <property type="match status" value="1"/>
</dbReference>
<dbReference type="Gene3D" id="3.30.1370.100">
    <property type="entry name" value="MutL, C-terminal domain, regulatory subdomain"/>
    <property type="match status" value="1"/>
</dbReference>
<dbReference type="HAMAP" id="MF_00149">
    <property type="entry name" value="DNA_mis_repair"/>
    <property type="match status" value="1"/>
</dbReference>
<dbReference type="InterPro" id="IPR014762">
    <property type="entry name" value="DNA_mismatch_repair_CS"/>
</dbReference>
<dbReference type="InterPro" id="IPR020667">
    <property type="entry name" value="DNA_mismatch_repair_MutL"/>
</dbReference>
<dbReference type="InterPro" id="IPR013507">
    <property type="entry name" value="DNA_mismatch_S5_2-like"/>
</dbReference>
<dbReference type="InterPro" id="IPR036890">
    <property type="entry name" value="HATPase_C_sf"/>
</dbReference>
<dbReference type="InterPro" id="IPR002099">
    <property type="entry name" value="MutL/Mlh/PMS"/>
</dbReference>
<dbReference type="InterPro" id="IPR038973">
    <property type="entry name" value="MutL/Mlh/Pms-like"/>
</dbReference>
<dbReference type="InterPro" id="IPR014790">
    <property type="entry name" value="MutL_C"/>
</dbReference>
<dbReference type="InterPro" id="IPR042120">
    <property type="entry name" value="MutL_C_dimsub"/>
</dbReference>
<dbReference type="InterPro" id="IPR042121">
    <property type="entry name" value="MutL_C_regsub"/>
</dbReference>
<dbReference type="InterPro" id="IPR037198">
    <property type="entry name" value="MutL_C_sf"/>
</dbReference>
<dbReference type="InterPro" id="IPR020568">
    <property type="entry name" value="Ribosomal_Su5_D2-typ_SF"/>
</dbReference>
<dbReference type="InterPro" id="IPR014721">
    <property type="entry name" value="Ribsml_uS5_D2-typ_fold_subgr"/>
</dbReference>
<dbReference type="NCBIfam" id="TIGR00585">
    <property type="entry name" value="mutl"/>
    <property type="match status" value="1"/>
</dbReference>
<dbReference type="PANTHER" id="PTHR10073">
    <property type="entry name" value="DNA MISMATCH REPAIR PROTEIN MLH, PMS, MUTL"/>
    <property type="match status" value="1"/>
</dbReference>
<dbReference type="PANTHER" id="PTHR10073:SF12">
    <property type="entry name" value="DNA MISMATCH REPAIR PROTEIN MLH1"/>
    <property type="match status" value="1"/>
</dbReference>
<dbReference type="Pfam" id="PF01119">
    <property type="entry name" value="DNA_mis_repair"/>
    <property type="match status" value="1"/>
</dbReference>
<dbReference type="Pfam" id="PF13589">
    <property type="entry name" value="HATPase_c_3"/>
    <property type="match status" value="1"/>
</dbReference>
<dbReference type="Pfam" id="PF08676">
    <property type="entry name" value="MutL_C"/>
    <property type="match status" value="1"/>
</dbReference>
<dbReference type="SMART" id="SM01340">
    <property type="entry name" value="DNA_mis_repair"/>
    <property type="match status" value="1"/>
</dbReference>
<dbReference type="SMART" id="SM00853">
    <property type="entry name" value="MutL_C"/>
    <property type="match status" value="1"/>
</dbReference>
<dbReference type="SUPFAM" id="SSF55874">
    <property type="entry name" value="ATPase domain of HSP90 chaperone/DNA topoisomerase II/histidine kinase"/>
    <property type="match status" value="1"/>
</dbReference>
<dbReference type="SUPFAM" id="SSF118116">
    <property type="entry name" value="DNA mismatch repair protein MutL"/>
    <property type="match status" value="1"/>
</dbReference>
<dbReference type="SUPFAM" id="SSF54211">
    <property type="entry name" value="Ribosomal protein S5 domain 2-like"/>
    <property type="match status" value="1"/>
</dbReference>
<dbReference type="PROSITE" id="PS00058">
    <property type="entry name" value="DNA_MISMATCH_REPAIR_1"/>
    <property type="match status" value="1"/>
</dbReference>
<gene>
    <name evidence="1" type="primary">mutL</name>
    <name type="ordered locus">CHY_1396</name>
</gene>
<organism>
    <name type="scientific">Carboxydothermus hydrogenoformans (strain ATCC BAA-161 / DSM 6008 / Z-2901)</name>
    <dbReference type="NCBI Taxonomy" id="246194"/>
    <lineage>
        <taxon>Bacteria</taxon>
        <taxon>Bacillati</taxon>
        <taxon>Bacillota</taxon>
        <taxon>Clostridia</taxon>
        <taxon>Thermoanaerobacterales</taxon>
        <taxon>Thermoanaerobacteraceae</taxon>
        <taxon>Carboxydothermus</taxon>
    </lineage>
</organism>
<reference key="1">
    <citation type="journal article" date="2005" name="PLoS Genet.">
        <title>Life in hot carbon monoxide: the complete genome sequence of Carboxydothermus hydrogenoformans Z-2901.</title>
        <authorList>
            <person name="Wu M."/>
            <person name="Ren Q."/>
            <person name="Durkin A.S."/>
            <person name="Daugherty S.C."/>
            <person name="Brinkac L.M."/>
            <person name="Dodson R.J."/>
            <person name="Madupu R."/>
            <person name="Sullivan S.A."/>
            <person name="Kolonay J.F."/>
            <person name="Nelson W.C."/>
            <person name="Tallon L.J."/>
            <person name="Jones K.M."/>
            <person name="Ulrich L.E."/>
            <person name="Gonzalez J.M."/>
            <person name="Zhulin I.B."/>
            <person name="Robb F.T."/>
            <person name="Eisen J.A."/>
        </authorList>
    </citation>
    <scope>NUCLEOTIDE SEQUENCE [LARGE SCALE GENOMIC DNA]</scope>
    <source>
        <strain>ATCC BAA-161 / DSM 6008 / Z-2901</strain>
    </source>
</reference>